<protein>
    <recommendedName>
        <fullName evidence="1">Anthranilate phosphoribosyltransferase</fullName>
        <ecNumber evidence="1">2.4.2.18</ecNumber>
    </recommendedName>
</protein>
<reference key="1">
    <citation type="journal article" date="1996" name="DNA Res.">
        <title>Sequence analysis of the genome of the unicellular cyanobacterium Synechocystis sp. strain PCC6803. II. Sequence determination of the entire genome and assignment of potential protein-coding regions.</title>
        <authorList>
            <person name="Kaneko T."/>
            <person name="Sato S."/>
            <person name="Kotani H."/>
            <person name="Tanaka A."/>
            <person name="Asamizu E."/>
            <person name="Nakamura Y."/>
            <person name="Miyajima N."/>
            <person name="Hirosawa M."/>
            <person name="Sugiura M."/>
            <person name="Sasamoto S."/>
            <person name="Kimura T."/>
            <person name="Hosouchi T."/>
            <person name="Matsuno A."/>
            <person name="Muraki A."/>
            <person name="Nakazaki N."/>
            <person name="Naruo K."/>
            <person name="Okumura S."/>
            <person name="Shimpo S."/>
            <person name="Takeuchi C."/>
            <person name="Wada T."/>
            <person name="Watanabe A."/>
            <person name="Yamada M."/>
            <person name="Yasuda M."/>
            <person name="Tabata S."/>
        </authorList>
    </citation>
    <scope>NUCLEOTIDE SEQUENCE [LARGE SCALE GENOMIC DNA]</scope>
    <source>
        <strain>ATCC 27184 / PCC 6803 / Kazusa</strain>
    </source>
</reference>
<feature type="chain" id="PRO_0000154495" description="Anthranilate phosphoribosyltransferase">
    <location>
        <begin position="1"/>
        <end position="348"/>
    </location>
</feature>
<feature type="binding site" evidence="1">
    <location>
        <position position="89"/>
    </location>
    <ligand>
        <name>5-phospho-alpha-D-ribose 1-diphosphate</name>
        <dbReference type="ChEBI" id="CHEBI:58017"/>
    </ligand>
</feature>
<feature type="binding site" evidence="1">
    <location>
        <position position="89"/>
    </location>
    <ligand>
        <name>anthranilate</name>
        <dbReference type="ChEBI" id="CHEBI:16567"/>
        <label>1</label>
    </ligand>
</feature>
<feature type="binding site" evidence="1">
    <location>
        <begin position="92"/>
        <end position="93"/>
    </location>
    <ligand>
        <name>5-phospho-alpha-D-ribose 1-diphosphate</name>
        <dbReference type="ChEBI" id="CHEBI:58017"/>
    </ligand>
</feature>
<feature type="binding site" evidence="1">
    <location>
        <position position="97"/>
    </location>
    <ligand>
        <name>5-phospho-alpha-D-ribose 1-diphosphate</name>
        <dbReference type="ChEBI" id="CHEBI:58017"/>
    </ligand>
</feature>
<feature type="binding site" evidence="1">
    <location>
        <begin position="99"/>
        <end position="102"/>
    </location>
    <ligand>
        <name>5-phospho-alpha-D-ribose 1-diphosphate</name>
        <dbReference type="ChEBI" id="CHEBI:58017"/>
    </ligand>
</feature>
<feature type="binding site" evidence="1">
    <location>
        <position position="101"/>
    </location>
    <ligand>
        <name>Mg(2+)</name>
        <dbReference type="ChEBI" id="CHEBI:18420"/>
        <label>1</label>
    </ligand>
</feature>
<feature type="binding site" evidence="1">
    <location>
        <begin position="117"/>
        <end position="125"/>
    </location>
    <ligand>
        <name>5-phospho-alpha-D-ribose 1-diphosphate</name>
        <dbReference type="ChEBI" id="CHEBI:58017"/>
    </ligand>
</feature>
<feature type="binding site" evidence="1">
    <location>
        <position position="120"/>
    </location>
    <ligand>
        <name>anthranilate</name>
        <dbReference type="ChEBI" id="CHEBI:16567"/>
        <label>1</label>
    </ligand>
</feature>
<feature type="binding site" evidence="1">
    <location>
        <position position="129"/>
    </location>
    <ligand>
        <name>5-phospho-alpha-D-ribose 1-diphosphate</name>
        <dbReference type="ChEBI" id="CHEBI:58017"/>
    </ligand>
</feature>
<feature type="binding site" evidence="1">
    <location>
        <position position="175"/>
    </location>
    <ligand>
        <name>anthranilate</name>
        <dbReference type="ChEBI" id="CHEBI:16567"/>
        <label>2</label>
    </ligand>
</feature>
<feature type="binding site" evidence="1">
    <location>
        <position position="234"/>
    </location>
    <ligand>
        <name>Mg(2+)</name>
        <dbReference type="ChEBI" id="CHEBI:18420"/>
        <label>2</label>
    </ligand>
</feature>
<feature type="binding site" evidence="1">
    <location>
        <position position="235"/>
    </location>
    <ligand>
        <name>Mg(2+)</name>
        <dbReference type="ChEBI" id="CHEBI:18420"/>
        <label>1</label>
    </ligand>
</feature>
<feature type="binding site" evidence="1">
    <location>
        <position position="235"/>
    </location>
    <ligand>
        <name>Mg(2+)</name>
        <dbReference type="ChEBI" id="CHEBI:18420"/>
        <label>2</label>
    </ligand>
</feature>
<gene>
    <name evidence="1" type="primary">trpD</name>
    <name type="ordered locus">slr1867</name>
</gene>
<name>TRPD_SYNY3</name>
<proteinExistence type="inferred from homology"/>
<sequence length="348" mass="36005">MNTTASSPWPPFLQQLLDRQSLTRQQAVQLMEGWLDDDIPPALSGAILAAIQAKGLDPEELTGMAQVLQEQSQGNQGREMVAPLVDTCGTGGDGSSTFNISTAVAFVVAAAGVKVAKHGNRSASSKVGSADVLEALGLNLQAGADQVAAAVSAVGITFLFAPGWHPALKSVAPIRKTLKVRTVFNLLGPLVNPLRPTGQVIGVYSPDFLSVMAIALKNLGTARAMVLHGREQLDEAGLGAPTDIASFNQGEVTPQVLDPQNFGLAPAPLTALKGGDLAENVTILSQVLQGKGTQAQIDAVALNASLALQVGDAVPWGDHGQGIHLAKDILSQGAGWDKLQQLVAFLGS</sequence>
<accession>P73617</accession>
<dbReference type="EC" id="2.4.2.18" evidence="1"/>
<dbReference type="EMBL" id="BA000022">
    <property type="protein sequence ID" value="BAA17662.1"/>
    <property type="molecule type" value="Genomic_DNA"/>
</dbReference>
<dbReference type="PIR" id="S77104">
    <property type="entry name" value="S77104"/>
</dbReference>
<dbReference type="SMR" id="P73617"/>
<dbReference type="FunCoup" id="P73617">
    <property type="interactions" value="416"/>
</dbReference>
<dbReference type="STRING" id="1148.gene:10498529"/>
<dbReference type="PaxDb" id="1148-1652743"/>
<dbReference type="EnsemblBacteria" id="BAA17662">
    <property type="protein sequence ID" value="BAA17662"/>
    <property type="gene ID" value="BAA17662"/>
</dbReference>
<dbReference type="KEGG" id="syn:slr1867"/>
<dbReference type="eggNOG" id="COG0547">
    <property type="taxonomic scope" value="Bacteria"/>
</dbReference>
<dbReference type="InParanoid" id="P73617"/>
<dbReference type="PhylomeDB" id="P73617"/>
<dbReference type="UniPathway" id="UPA00035">
    <property type="reaction ID" value="UER00041"/>
</dbReference>
<dbReference type="Proteomes" id="UP000001425">
    <property type="component" value="Chromosome"/>
</dbReference>
<dbReference type="GO" id="GO:0005829">
    <property type="term" value="C:cytosol"/>
    <property type="evidence" value="ECO:0000318"/>
    <property type="project" value="GO_Central"/>
</dbReference>
<dbReference type="GO" id="GO:0004048">
    <property type="term" value="F:anthranilate phosphoribosyltransferase activity"/>
    <property type="evidence" value="ECO:0007669"/>
    <property type="project" value="UniProtKB-UniRule"/>
</dbReference>
<dbReference type="GO" id="GO:0000287">
    <property type="term" value="F:magnesium ion binding"/>
    <property type="evidence" value="ECO:0007669"/>
    <property type="project" value="UniProtKB-UniRule"/>
</dbReference>
<dbReference type="GO" id="GO:0000162">
    <property type="term" value="P:L-tryptophan biosynthetic process"/>
    <property type="evidence" value="ECO:0000318"/>
    <property type="project" value="GO_Central"/>
</dbReference>
<dbReference type="FunFam" id="1.20.970.10:FF:000027">
    <property type="entry name" value="Anthranilate phosphoribosyltransferase"/>
    <property type="match status" value="1"/>
</dbReference>
<dbReference type="FunFam" id="3.40.1030.10:FF:000002">
    <property type="entry name" value="Anthranilate phosphoribosyltransferase"/>
    <property type="match status" value="1"/>
</dbReference>
<dbReference type="Gene3D" id="3.40.1030.10">
    <property type="entry name" value="Nucleoside phosphorylase/phosphoribosyltransferase catalytic domain"/>
    <property type="match status" value="1"/>
</dbReference>
<dbReference type="Gene3D" id="1.20.970.10">
    <property type="entry name" value="Transferase, Pyrimidine Nucleoside Phosphorylase, Chain C"/>
    <property type="match status" value="1"/>
</dbReference>
<dbReference type="HAMAP" id="MF_00211">
    <property type="entry name" value="TrpD"/>
    <property type="match status" value="1"/>
</dbReference>
<dbReference type="InterPro" id="IPR005940">
    <property type="entry name" value="Anthranilate_Pribosyl_Tfrase"/>
</dbReference>
<dbReference type="InterPro" id="IPR000312">
    <property type="entry name" value="Glycosyl_Trfase_fam3"/>
</dbReference>
<dbReference type="InterPro" id="IPR017459">
    <property type="entry name" value="Glycosyl_Trfase_fam3_N_dom"/>
</dbReference>
<dbReference type="InterPro" id="IPR036320">
    <property type="entry name" value="Glycosyl_Trfase_fam3_N_dom_sf"/>
</dbReference>
<dbReference type="InterPro" id="IPR035902">
    <property type="entry name" value="Nuc_phospho_transferase"/>
</dbReference>
<dbReference type="NCBIfam" id="TIGR01245">
    <property type="entry name" value="trpD"/>
    <property type="match status" value="1"/>
</dbReference>
<dbReference type="PANTHER" id="PTHR43285">
    <property type="entry name" value="ANTHRANILATE PHOSPHORIBOSYLTRANSFERASE"/>
    <property type="match status" value="1"/>
</dbReference>
<dbReference type="PANTHER" id="PTHR43285:SF2">
    <property type="entry name" value="ANTHRANILATE PHOSPHORIBOSYLTRANSFERASE"/>
    <property type="match status" value="1"/>
</dbReference>
<dbReference type="Pfam" id="PF02885">
    <property type="entry name" value="Glycos_trans_3N"/>
    <property type="match status" value="1"/>
</dbReference>
<dbReference type="Pfam" id="PF00591">
    <property type="entry name" value="Glycos_transf_3"/>
    <property type="match status" value="1"/>
</dbReference>
<dbReference type="SUPFAM" id="SSF52418">
    <property type="entry name" value="Nucleoside phosphorylase/phosphoribosyltransferase catalytic domain"/>
    <property type="match status" value="1"/>
</dbReference>
<dbReference type="SUPFAM" id="SSF47648">
    <property type="entry name" value="Nucleoside phosphorylase/phosphoribosyltransferase N-terminal domain"/>
    <property type="match status" value="1"/>
</dbReference>
<keyword id="KW-0028">Amino-acid biosynthesis</keyword>
<keyword id="KW-0057">Aromatic amino acid biosynthesis</keyword>
<keyword id="KW-0328">Glycosyltransferase</keyword>
<keyword id="KW-0460">Magnesium</keyword>
<keyword id="KW-0479">Metal-binding</keyword>
<keyword id="KW-1185">Reference proteome</keyword>
<keyword id="KW-0808">Transferase</keyword>
<keyword id="KW-0822">Tryptophan biosynthesis</keyword>
<organism>
    <name type="scientific">Synechocystis sp. (strain ATCC 27184 / PCC 6803 / Kazusa)</name>
    <dbReference type="NCBI Taxonomy" id="1111708"/>
    <lineage>
        <taxon>Bacteria</taxon>
        <taxon>Bacillati</taxon>
        <taxon>Cyanobacteriota</taxon>
        <taxon>Cyanophyceae</taxon>
        <taxon>Synechococcales</taxon>
        <taxon>Merismopediaceae</taxon>
        <taxon>Synechocystis</taxon>
    </lineage>
</organism>
<evidence type="ECO:0000255" key="1">
    <source>
        <dbReference type="HAMAP-Rule" id="MF_00211"/>
    </source>
</evidence>
<comment type="function">
    <text evidence="1">Catalyzes the transfer of the phosphoribosyl group of 5-phosphorylribose-1-pyrophosphate (PRPP) to anthranilate to yield N-(5'-phosphoribosyl)-anthranilate (PRA).</text>
</comment>
<comment type="catalytic activity">
    <reaction evidence="1">
        <text>N-(5-phospho-beta-D-ribosyl)anthranilate + diphosphate = 5-phospho-alpha-D-ribose 1-diphosphate + anthranilate</text>
        <dbReference type="Rhea" id="RHEA:11768"/>
        <dbReference type="ChEBI" id="CHEBI:16567"/>
        <dbReference type="ChEBI" id="CHEBI:18277"/>
        <dbReference type="ChEBI" id="CHEBI:33019"/>
        <dbReference type="ChEBI" id="CHEBI:58017"/>
        <dbReference type="EC" id="2.4.2.18"/>
    </reaction>
</comment>
<comment type="cofactor">
    <cofactor evidence="1">
        <name>Mg(2+)</name>
        <dbReference type="ChEBI" id="CHEBI:18420"/>
    </cofactor>
    <text evidence="1">Binds 2 magnesium ions per monomer.</text>
</comment>
<comment type="pathway">
    <text evidence="1">Amino-acid biosynthesis; L-tryptophan biosynthesis; L-tryptophan from chorismate: step 2/5.</text>
</comment>
<comment type="subunit">
    <text evidence="1">Homodimer.</text>
</comment>
<comment type="similarity">
    <text evidence="1">Belongs to the anthranilate phosphoribosyltransferase family.</text>
</comment>